<reference key="1">
    <citation type="journal article" date="2008" name="PLoS ONE">
        <title>Genome biology of Actinobacillus pleuropneumoniae JL03, an isolate of serotype 3 prevalent in China.</title>
        <authorList>
            <person name="Xu Z."/>
            <person name="Zhou Y."/>
            <person name="Li L."/>
            <person name="Zhou R."/>
            <person name="Xiao S."/>
            <person name="Wan Y."/>
            <person name="Zhang S."/>
            <person name="Wang K."/>
            <person name="Li W."/>
            <person name="Li L."/>
            <person name="Jin H."/>
            <person name="Kang M."/>
            <person name="Dalai B."/>
            <person name="Li T."/>
            <person name="Liu L."/>
            <person name="Cheng Y."/>
            <person name="Zhang L."/>
            <person name="Xu T."/>
            <person name="Zheng H."/>
            <person name="Pu S."/>
            <person name="Wang B."/>
            <person name="Gu W."/>
            <person name="Zhang X.L."/>
            <person name="Zhu G.-F."/>
            <person name="Wang S."/>
            <person name="Zhao G.-P."/>
            <person name="Chen H."/>
        </authorList>
    </citation>
    <scope>NUCLEOTIDE SEQUENCE [LARGE SCALE GENOMIC DNA]</scope>
    <source>
        <strain>JL03</strain>
    </source>
</reference>
<accession>B0BPV1</accession>
<comment type="function">
    <text evidence="1">Together with its co-chaperonin GroES, plays an essential role in assisting protein folding. The GroEL-GroES system forms a nano-cage that allows encapsulation of the non-native substrate proteins and provides a physical environment optimized to promote and accelerate protein folding.</text>
</comment>
<comment type="catalytic activity">
    <reaction evidence="1">
        <text>ATP + H2O + a folded polypeptide = ADP + phosphate + an unfolded polypeptide.</text>
        <dbReference type="EC" id="5.6.1.7"/>
    </reaction>
</comment>
<comment type="subunit">
    <text evidence="1">Forms a cylinder of 14 subunits composed of two heptameric rings stacked back-to-back. Interacts with the co-chaperonin GroES.</text>
</comment>
<comment type="subcellular location">
    <subcellularLocation>
        <location evidence="1">Cytoplasm</location>
    </subcellularLocation>
</comment>
<comment type="similarity">
    <text evidence="1">Belongs to the chaperonin (HSP60) family.</text>
</comment>
<dbReference type="EC" id="5.6.1.7" evidence="1"/>
<dbReference type="EMBL" id="CP000687">
    <property type="protein sequence ID" value="ABY69586.1"/>
    <property type="molecule type" value="Genomic_DNA"/>
</dbReference>
<dbReference type="RefSeq" id="WP_005597791.1">
    <property type="nucleotide sequence ID" value="NC_010278.1"/>
</dbReference>
<dbReference type="SMR" id="B0BPV1"/>
<dbReference type="GeneID" id="48599239"/>
<dbReference type="KEGG" id="apj:APJL_1030"/>
<dbReference type="HOGENOM" id="CLU_016503_3_0_6"/>
<dbReference type="Proteomes" id="UP000008547">
    <property type="component" value="Chromosome"/>
</dbReference>
<dbReference type="GO" id="GO:0005737">
    <property type="term" value="C:cytoplasm"/>
    <property type="evidence" value="ECO:0007669"/>
    <property type="project" value="UniProtKB-SubCell"/>
</dbReference>
<dbReference type="GO" id="GO:0005524">
    <property type="term" value="F:ATP binding"/>
    <property type="evidence" value="ECO:0007669"/>
    <property type="project" value="UniProtKB-UniRule"/>
</dbReference>
<dbReference type="GO" id="GO:0140662">
    <property type="term" value="F:ATP-dependent protein folding chaperone"/>
    <property type="evidence" value="ECO:0007669"/>
    <property type="project" value="InterPro"/>
</dbReference>
<dbReference type="GO" id="GO:0016853">
    <property type="term" value="F:isomerase activity"/>
    <property type="evidence" value="ECO:0007669"/>
    <property type="project" value="UniProtKB-KW"/>
</dbReference>
<dbReference type="GO" id="GO:0051082">
    <property type="term" value="F:unfolded protein binding"/>
    <property type="evidence" value="ECO:0007669"/>
    <property type="project" value="UniProtKB-UniRule"/>
</dbReference>
<dbReference type="GO" id="GO:0042026">
    <property type="term" value="P:protein refolding"/>
    <property type="evidence" value="ECO:0007669"/>
    <property type="project" value="UniProtKB-UniRule"/>
</dbReference>
<dbReference type="CDD" id="cd03344">
    <property type="entry name" value="GroEL"/>
    <property type="match status" value="1"/>
</dbReference>
<dbReference type="FunFam" id="1.10.560.10:FF:000001">
    <property type="entry name" value="60 kDa chaperonin"/>
    <property type="match status" value="1"/>
</dbReference>
<dbReference type="FunFam" id="3.50.7.10:FF:000001">
    <property type="entry name" value="60 kDa chaperonin"/>
    <property type="match status" value="1"/>
</dbReference>
<dbReference type="Gene3D" id="3.50.7.10">
    <property type="entry name" value="GroEL"/>
    <property type="match status" value="1"/>
</dbReference>
<dbReference type="Gene3D" id="1.10.560.10">
    <property type="entry name" value="GroEL-like equatorial domain"/>
    <property type="match status" value="1"/>
</dbReference>
<dbReference type="Gene3D" id="3.30.260.10">
    <property type="entry name" value="TCP-1-like chaperonin intermediate domain"/>
    <property type="match status" value="1"/>
</dbReference>
<dbReference type="HAMAP" id="MF_00600">
    <property type="entry name" value="CH60"/>
    <property type="match status" value="1"/>
</dbReference>
<dbReference type="InterPro" id="IPR018370">
    <property type="entry name" value="Chaperonin_Cpn60_CS"/>
</dbReference>
<dbReference type="InterPro" id="IPR001844">
    <property type="entry name" value="Cpn60/GroEL"/>
</dbReference>
<dbReference type="InterPro" id="IPR002423">
    <property type="entry name" value="Cpn60/GroEL/TCP-1"/>
</dbReference>
<dbReference type="InterPro" id="IPR027409">
    <property type="entry name" value="GroEL-like_apical_dom_sf"/>
</dbReference>
<dbReference type="InterPro" id="IPR027413">
    <property type="entry name" value="GROEL-like_equatorial_sf"/>
</dbReference>
<dbReference type="InterPro" id="IPR027410">
    <property type="entry name" value="TCP-1-like_intermed_sf"/>
</dbReference>
<dbReference type="NCBIfam" id="TIGR02348">
    <property type="entry name" value="GroEL"/>
    <property type="match status" value="1"/>
</dbReference>
<dbReference type="NCBIfam" id="NF000592">
    <property type="entry name" value="PRK00013.1"/>
    <property type="match status" value="1"/>
</dbReference>
<dbReference type="NCBIfam" id="NF009487">
    <property type="entry name" value="PRK12849.1"/>
    <property type="match status" value="1"/>
</dbReference>
<dbReference type="NCBIfam" id="NF009488">
    <property type="entry name" value="PRK12850.1"/>
    <property type="match status" value="1"/>
</dbReference>
<dbReference type="NCBIfam" id="NF009489">
    <property type="entry name" value="PRK12851.1"/>
    <property type="match status" value="1"/>
</dbReference>
<dbReference type="PANTHER" id="PTHR45633">
    <property type="entry name" value="60 KDA HEAT SHOCK PROTEIN, MITOCHONDRIAL"/>
    <property type="match status" value="1"/>
</dbReference>
<dbReference type="Pfam" id="PF00118">
    <property type="entry name" value="Cpn60_TCP1"/>
    <property type="match status" value="1"/>
</dbReference>
<dbReference type="PRINTS" id="PR00298">
    <property type="entry name" value="CHAPERONIN60"/>
</dbReference>
<dbReference type="SUPFAM" id="SSF52029">
    <property type="entry name" value="GroEL apical domain-like"/>
    <property type="match status" value="1"/>
</dbReference>
<dbReference type="SUPFAM" id="SSF48592">
    <property type="entry name" value="GroEL equatorial domain-like"/>
    <property type="match status" value="2"/>
</dbReference>
<dbReference type="PROSITE" id="PS00296">
    <property type="entry name" value="CHAPERONINS_CPN60"/>
    <property type="match status" value="1"/>
</dbReference>
<organism>
    <name type="scientific">Actinobacillus pleuropneumoniae serotype 3 (strain JL03)</name>
    <dbReference type="NCBI Taxonomy" id="434271"/>
    <lineage>
        <taxon>Bacteria</taxon>
        <taxon>Pseudomonadati</taxon>
        <taxon>Pseudomonadota</taxon>
        <taxon>Gammaproteobacteria</taxon>
        <taxon>Pasteurellales</taxon>
        <taxon>Pasteurellaceae</taxon>
        <taxon>Actinobacillus</taxon>
    </lineage>
</organism>
<sequence>MAAKDVKFGNDARVKMLKGVNVLADAVKVTLGPKGRNVVLDKAYGAPTITKDGVSVAREIELEDKFENMGAQMVKEVASKANDAAGDGTTTATVLAQAIVNEGLKAVAAGMNPMDLKRGIDKAVVAVVEELKAISKPCETSKEIEQVGTISANSDETVGKLIAQAMEKVGKEGVITVEDGTGLDDALDVVEGMQFDRGYLSPYFINKPEAGTVELENPYIILVDKKISNIREILPVLEAVAKAGKPLLIVAEDIEGEALATLVVNTMRGIVKVAAVKAPGFGDRRKAMLQDIAILTAGTVISEEIGMELEKATLEELGQAKRVVITKDNTTIIDGIGDEAQIKARVAQIRQQIEDSTSDYDKEKLQERVAKLAGGVAVIKVGAATEVAMKEKKDRVDDALHATRAAVEEGIVPGGGVALVRAASKVATTLTGDNEEQNVGIKLALRAMEAPLRQIVTNAGEEASVVARNVKDGNGNYGYNAGTEQYGDMLEMGILDPTKVTRSALQFAASIAGLMITTECMITDLPKEEKLDPAAAMGGMGGMGGMM</sequence>
<gene>
    <name evidence="1" type="primary">groEL</name>
    <name evidence="1" type="synonym">groL</name>
    <name type="ordered locus">APJL_1030</name>
</gene>
<protein>
    <recommendedName>
        <fullName evidence="1">Chaperonin GroEL</fullName>
        <ecNumber evidence="1">5.6.1.7</ecNumber>
    </recommendedName>
    <alternativeName>
        <fullName evidence="1">60 kDa chaperonin</fullName>
    </alternativeName>
    <alternativeName>
        <fullName evidence="1">Chaperonin-60</fullName>
        <shortName evidence="1">Cpn60</shortName>
    </alternativeName>
</protein>
<name>CH60_ACTPJ</name>
<proteinExistence type="inferred from homology"/>
<keyword id="KW-0067">ATP-binding</keyword>
<keyword id="KW-0143">Chaperone</keyword>
<keyword id="KW-0963">Cytoplasm</keyword>
<keyword id="KW-0413">Isomerase</keyword>
<keyword id="KW-0547">Nucleotide-binding</keyword>
<evidence type="ECO:0000255" key="1">
    <source>
        <dbReference type="HAMAP-Rule" id="MF_00600"/>
    </source>
</evidence>
<feature type="chain" id="PRO_1000129965" description="Chaperonin GroEL">
    <location>
        <begin position="1"/>
        <end position="547"/>
    </location>
</feature>
<feature type="binding site" evidence="1">
    <location>
        <begin position="30"/>
        <end position="33"/>
    </location>
    <ligand>
        <name>ATP</name>
        <dbReference type="ChEBI" id="CHEBI:30616"/>
    </ligand>
</feature>
<feature type="binding site" evidence="1">
    <location>
        <position position="51"/>
    </location>
    <ligand>
        <name>ATP</name>
        <dbReference type="ChEBI" id="CHEBI:30616"/>
    </ligand>
</feature>
<feature type="binding site" evidence="1">
    <location>
        <begin position="87"/>
        <end position="91"/>
    </location>
    <ligand>
        <name>ATP</name>
        <dbReference type="ChEBI" id="CHEBI:30616"/>
    </ligand>
</feature>
<feature type="binding site" evidence="1">
    <location>
        <position position="415"/>
    </location>
    <ligand>
        <name>ATP</name>
        <dbReference type="ChEBI" id="CHEBI:30616"/>
    </ligand>
</feature>
<feature type="binding site" evidence="1">
    <location>
        <position position="496"/>
    </location>
    <ligand>
        <name>ATP</name>
        <dbReference type="ChEBI" id="CHEBI:30616"/>
    </ligand>
</feature>